<reference key="1">
    <citation type="journal article" date="2011" name="J. Bacteriol.">
        <title>Comparative genomics of 28 Salmonella enterica isolates: evidence for CRISPR-mediated adaptive sublineage evolution.</title>
        <authorList>
            <person name="Fricke W.F."/>
            <person name="Mammel M.K."/>
            <person name="McDermott P.F."/>
            <person name="Tartera C."/>
            <person name="White D.G."/>
            <person name="Leclerc J.E."/>
            <person name="Ravel J."/>
            <person name="Cebula T.A."/>
        </authorList>
    </citation>
    <scope>NUCLEOTIDE SEQUENCE [LARGE SCALE GENOMIC DNA]</scope>
    <source>
        <strain>SL476</strain>
    </source>
</reference>
<keyword id="KW-0687">Ribonucleoprotein</keyword>
<keyword id="KW-0689">Ribosomal protein</keyword>
<sequence length="82" mass="9235">MVTIRLARHGAKKRPFYQVVVTDSRNARNGRFIERVGFFNPIASEKEEGTRLDLDRIAHWVGQGATISDRVAALIKEVKKAA</sequence>
<gene>
    <name evidence="1" type="primary">rpsP</name>
    <name type="ordered locus">SeHA_C2892</name>
</gene>
<comment type="similarity">
    <text evidence="1">Belongs to the bacterial ribosomal protein bS16 family.</text>
</comment>
<evidence type="ECO:0000255" key="1">
    <source>
        <dbReference type="HAMAP-Rule" id="MF_00385"/>
    </source>
</evidence>
<evidence type="ECO:0000305" key="2"/>
<dbReference type="EMBL" id="CP001120">
    <property type="protein sequence ID" value="ACF70245.1"/>
    <property type="molecule type" value="Genomic_DNA"/>
</dbReference>
<dbReference type="RefSeq" id="WP_000256453.1">
    <property type="nucleotide sequence ID" value="NC_011083.1"/>
</dbReference>
<dbReference type="SMR" id="B4TE53"/>
<dbReference type="KEGG" id="seh:SeHA_C2892"/>
<dbReference type="HOGENOM" id="CLU_100590_5_1_6"/>
<dbReference type="Proteomes" id="UP000001866">
    <property type="component" value="Chromosome"/>
</dbReference>
<dbReference type="GO" id="GO:0005737">
    <property type="term" value="C:cytoplasm"/>
    <property type="evidence" value="ECO:0007669"/>
    <property type="project" value="UniProtKB-ARBA"/>
</dbReference>
<dbReference type="GO" id="GO:0015935">
    <property type="term" value="C:small ribosomal subunit"/>
    <property type="evidence" value="ECO:0007669"/>
    <property type="project" value="TreeGrafter"/>
</dbReference>
<dbReference type="GO" id="GO:0003735">
    <property type="term" value="F:structural constituent of ribosome"/>
    <property type="evidence" value="ECO:0007669"/>
    <property type="project" value="InterPro"/>
</dbReference>
<dbReference type="GO" id="GO:0006412">
    <property type="term" value="P:translation"/>
    <property type="evidence" value="ECO:0007669"/>
    <property type="project" value="UniProtKB-UniRule"/>
</dbReference>
<dbReference type="FunFam" id="3.30.1320.10:FF:000001">
    <property type="entry name" value="30S ribosomal protein S16"/>
    <property type="match status" value="1"/>
</dbReference>
<dbReference type="Gene3D" id="3.30.1320.10">
    <property type="match status" value="1"/>
</dbReference>
<dbReference type="HAMAP" id="MF_00385">
    <property type="entry name" value="Ribosomal_bS16"/>
    <property type="match status" value="1"/>
</dbReference>
<dbReference type="InterPro" id="IPR000307">
    <property type="entry name" value="Ribosomal_bS16"/>
</dbReference>
<dbReference type="InterPro" id="IPR020592">
    <property type="entry name" value="Ribosomal_bS16_CS"/>
</dbReference>
<dbReference type="InterPro" id="IPR023803">
    <property type="entry name" value="Ribosomal_bS16_dom_sf"/>
</dbReference>
<dbReference type="NCBIfam" id="TIGR00002">
    <property type="entry name" value="S16"/>
    <property type="match status" value="1"/>
</dbReference>
<dbReference type="PANTHER" id="PTHR12919">
    <property type="entry name" value="30S RIBOSOMAL PROTEIN S16"/>
    <property type="match status" value="1"/>
</dbReference>
<dbReference type="PANTHER" id="PTHR12919:SF20">
    <property type="entry name" value="SMALL RIBOSOMAL SUBUNIT PROTEIN BS16M"/>
    <property type="match status" value="1"/>
</dbReference>
<dbReference type="Pfam" id="PF00886">
    <property type="entry name" value="Ribosomal_S16"/>
    <property type="match status" value="1"/>
</dbReference>
<dbReference type="SUPFAM" id="SSF54565">
    <property type="entry name" value="Ribosomal protein S16"/>
    <property type="match status" value="1"/>
</dbReference>
<dbReference type="PROSITE" id="PS00732">
    <property type="entry name" value="RIBOSOMAL_S16"/>
    <property type="match status" value="1"/>
</dbReference>
<feature type="chain" id="PRO_1000196469" description="Small ribosomal subunit protein bS16">
    <location>
        <begin position="1"/>
        <end position="82"/>
    </location>
</feature>
<protein>
    <recommendedName>
        <fullName evidence="1">Small ribosomal subunit protein bS16</fullName>
    </recommendedName>
    <alternativeName>
        <fullName evidence="2">30S ribosomal protein S16</fullName>
    </alternativeName>
</protein>
<proteinExistence type="inferred from homology"/>
<organism>
    <name type="scientific">Salmonella heidelberg (strain SL476)</name>
    <dbReference type="NCBI Taxonomy" id="454169"/>
    <lineage>
        <taxon>Bacteria</taxon>
        <taxon>Pseudomonadati</taxon>
        <taxon>Pseudomonadota</taxon>
        <taxon>Gammaproteobacteria</taxon>
        <taxon>Enterobacterales</taxon>
        <taxon>Enterobacteriaceae</taxon>
        <taxon>Salmonella</taxon>
    </lineage>
</organism>
<name>RS16_SALHS</name>
<accession>B4TE53</accession>